<organism>
    <name type="scientific">Bdellovibrio bacteriovorus (strain ATCC 15356 / DSM 50701 / NCIMB 9529 / HD100)</name>
    <dbReference type="NCBI Taxonomy" id="264462"/>
    <lineage>
        <taxon>Bacteria</taxon>
        <taxon>Pseudomonadati</taxon>
        <taxon>Bdellovibrionota</taxon>
        <taxon>Bdellovibrionia</taxon>
        <taxon>Bdellovibrionales</taxon>
        <taxon>Pseudobdellovibrionaceae</taxon>
        <taxon>Bdellovibrio</taxon>
    </lineage>
</organism>
<proteinExistence type="inferred from homology"/>
<keyword id="KW-0963">Cytoplasm</keyword>
<keyword id="KW-0251">Elongation factor</keyword>
<keyword id="KW-0342">GTP-binding</keyword>
<keyword id="KW-0378">Hydrolase</keyword>
<keyword id="KW-0460">Magnesium</keyword>
<keyword id="KW-0479">Metal-binding</keyword>
<keyword id="KW-0547">Nucleotide-binding</keyword>
<keyword id="KW-0648">Protein biosynthesis</keyword>
<keyword id="KW-1185">Reference proteome</keyword>
<name>EFTU_BDEBA</name>
<reference key="1">
    <citation type="journal article" date="2004" name="Science">
        <title>A predator unmasked: life cycle of Bdellovibrio bacteriovorus from a genomic perspective.</title>
        <authorList>
            <person name="Rendulic S."/>
            <person name="Jagtap P."/>
            <person name="Rosinus A."/>
            <person name="Eppinger M."/>
            <person name="Baar C."/>
            <person name="Lanz C."/>
            <person name="Keller H."/>
            <person name="Lambert C."/>
            <person name="Evans K.J."/>
            <person name="Goesmann A."/>
            <person name="Meyer F."/>
            <person name="Sockett R.E."/>
            <person name="Schuster S.C."/>
        </authorList>
    </citation>
    <scope>NUCLEOTIDE SEQUENCE [LARGE SCALE GENOMIC DNA]</scope>
    <source>
        <strain>ATCC 15356 / DSM 50701 / NCIMB 9529 / HD100</strain>
    </source>
</reference>
<comment type="function">
    <text evidence="2">GTP hydrolase that promotes the GTP-dependent binding of aminoacyl-tRNA to the A-site of ribosomes during protein biosynthesis.</text>
</comment>
<comment type="catalytic activity">
    <reaction evidence="2">
        <text>GTP + H2O = GDP + phosphate + H(+)</text>
        <dbReference type="Rhea" id="RHEA:19669"/>
        <dbReference type="ChEBI" id="CHEBI:15377"/>
        <dbReference type="ChEBI" id="CHEBI:15378"/>
        <dbReference type="ChEBI" id="CHEBI:37565"/>
        <dbReference type="ChEBI" id="CHEBI:43474"/>
        <dbReference type="ChEBI" id="CHEBI:58189"/>
        <dbReference type="EC" id="3.6.5.3"/>
    </reaction>
    <physiologicalReaction direction="left-to-right" evidence="2">
        <dbReference type="Rhea" id="RHEA:19670"/>
    </physiologicalReaction>
</comment>
<comment type="subunit">
    <text evidence="2">Monomer.</text>
</comment>
<comment type="subcellular location">
    <subcellularLocation>
        <location evidence="2">Cytoplasm</location>
    </subcellularLocation>
</comment>
<comment type="similarity">
    <text evidence="2">Belongs to the TRAFAC class translation factor GTPase superfamily. Classic translation factor GTPase family. EF-Tu/EF-1A subfamily.</text>
</comment>
<dbReference type="EC" id="3.6.5.3" evidence="2"/>
<dbReference type="EMBL" id="BX842654">
    <property type="protein sequence ID" value="CAE80763.1"/>
    <property type="molecule type" value="Genomic_DNA"/>
</dbReference>
<dbReference type="RefSeq" id="WP_011165367.1">
    <property type="nucleotide sequence ID" value="NC_005363.1"/>
</dbReference>
<dbReference type="SMR" id="Q6MJ00"/>
<dbReference type="STRING" id="264462.Bd2994"/>
<dbReference type="GeneID" id="93013854"/>
<dbReference type="KEGG" id="bba:Bd2994"/>
<dbReference type="eggNOG" id="COG0050">
    <property type="taxonomic scope" value="Bacteria"/>
</dbReference>
<dbReference type="HOGENOM" id="CLU_007265_0_0_7"/>
<dbReference type="Proteomes" id="UP000008080">
    <property type="component" value="Chromosome"/>
</dbReference>
<dbReference type="GO" id="GO:0005829">
    <property type="term" value="C:cytosol"/>
    <property type="evidence" value="ECO:0007669"/>
    <property type="project" value="TreeGrafter"/>
</dbReference>
<dbReference type="GO" id="GO:0005525">
    <property type="term" value="F:GTP binding"/>
    <property type="evidence" value="ECO:0007669"/>
    <property type="project" value="UniProtKB-UniRule"/>
</dbReference>
<dbReference type="GO" id="GO:0003924">
    <property type="term" value="F:GTPase activity"/>
    <property type="evidence" value="ECO:0007669"/>
    <property type="project" value="InterPro"/>
</dbReference>
<dbReference type="GO" id="GO:0003746">
    <property type="term" value="F:translation elongation factor activity"/>
    <property type="evidence" value="ECO:0007669"/>
    <property type="project" value="UniProtKB-UniRule"/>
</dbReference>
<dbReference type="CDD" id="cd01884">
    <property type="entry name" value="EF_Tu"/>
    <property type="match status" value="1"/>
</dbReference>
<dbReference type="CDD" id="cd03697">
    <property type="entry name" value="EFTU_II"/>
    <property type="match status" value="1"/>
</dbReference>
<dbReference type="CDD" id="cd03707">
    <property type="entry name" value="EFTU_III"/>
    <property type="match status" value="1"/>
</dbReference>
<dbReference type="FunFam" id="2.40.30.10:FF:000001">
    <property type="entry name" value="Elongation factor Tu"/>
    <property type="match status" value="1"/>
</dbReference>
<dbReference type="FunFam" id="3.40.50.300:FF:000003">
    <property type="entry name" value="Elongation factor Tu"/>
    <property type="match status" value="1"/>
</dbReference>
<dbReference type="Gene3D" id="3.40.50.300">
    <property type="entry name" value="P-loop containing nucleotide triphosphate hydrolases"/>
    <property type="match status" value="1"/>
</dbReference>
<dbReference type="Gene3D" id="2.40.30.10">
    <property type="entry name" value="Translation factors"/>
    <property type="match status" value="2"/>
</dbReference>
<dbReference type="HAMAP" id="MF_00118_B">
    <property type="entry name" value="EF_Tu_B"/>
    <property type="match status" value="1"/>
</dbReference>
<dbReference type="InterPro" id="IPR041709">
    <property type="entry name" value="EF-Tu_GTP-bd"/>
</dbReference>
<dbReference type="InterPro" id="IPR050055">
    <property type="entry name" value="EF-Tu_GTPase"/>
</dbReference>
<dbReference type="InterPro" id="IPR004161">
    <property type="entry name" value="EFTu-like_2"/>
</dbReference>
<dbReference type="InterPro" id="IPR033720">
    <property type="entry name" value="EFTU_2"/>
</dbReference>
<dbReference type="InterPro" id="IPR031157">
    <property type="entry name" value="G_TR_CS"/>
</dbReference>
<dbReference type="InterPro" id="IPR027417">
    <property type="entry name" value="P-loop_NTPase"/>
</dbReference>
<dbReference type="InterPro" id="IPR005225">
    <property type="entry name" value="Small_GTP-bd"/>
</dbReference>
<dbReference type="InterPro" id="IPR000795">
    <property type="entry name" value="T_Tr_GTP-bd_dom"/>
</dbReference>
<dbReference type="InterPro" id="IPR009000">
    <property type="entry name" value="Transl_B-barrel_sf"/>
</dbReference>
<dbReference type="InterPro" id="IPR009001">
    <property type="entry name" value="Transl_elong_EF1A/Init_IF2_C"/>
</dbReference>
<dbReference type="InterPro" id="IPR004541">
    <property type="entry name" value="Transl_elong_EFTu/EF1A_bac/org"/>
</dbReference>
<dbReference type="InterPro" id="IPR004160">
    <property type="entry name" value="Transl_elong_EFTu/EF1A_C"/>
</dbReference>
<dbReference type="NCBIfam" id="TIGR00485">
    <property type="entry name" value="EF-Tu"/>
    <property type="match status" value="1"/>
</dbReference>
<dbReference type="NCBIfam" id="NF000766">
    <property type="entry name" value="PRK00049.1"/>
    <property type="match status" value="1"/>
</dbReference>
<dbReference type="NCBIfam" id="NF009372">
    <property type="entry name" value="PRK12735.1"/>
    <property type="match status" value="1"/>
</dbReference>
<dbReference type="NCBIfam" id="NF009373">
    <property type="entry name" value="PRK12736.1"/>
    <property type="match status" value="1"/>
</dbReference>
<dbReference type="NCBIfam" id="TIGR00231">
    <property type="entry name" value="small_GTP"/>
    <property type="match status" value="1"/>
</dbReference>
<dbReference type="PANTHER" id="PTHR43721:SF22">
    <property type="entry name" value="ELONGATION FACTOR TU, MITOCHONDRIAL"/>
    <property type="match status" value="1"/>
</dbReference>
<dbReference type="PANTHER" id="PTHR43721">
    <property type="entry name" value="ELONGATION FACTOR TU-RELATED"/>
    <property type="match status" value="1"/>
</dbReference>
<dbReference type="Pfam" id="PF00009">
    <property type="entry name" value="GTP_EFTU"/>
    <property type="match status" value="1"/>
</dbReference>
<dbReference type="Pfam" id="PF03144">
    <property type="entry name" value="GTP_EFTU_D2"/>
    <property type="match status" value="1"/>
</dbReference>
<dbReference type="Pfam" id="PF03143">
    <property type="entry name" value="GTP_EFTU_D3"/>
    <property type="match status" value="1"/>
</dbReference>
<dbReference type="PRINTS" id="PR00315">
    <property type="entry name" value="ELONGATNFCT"/>
</dbReference>
<dbReference type="SUPFAM" id="SSF50465">
    <property type="entry name" value="EF-Tu/eEF-1alpha/eIF2-gamma C-terminal domain"/>
    <property type="match status" value="1"/>
</dbReference>
<dbReference type="SUPFAM" id="SSF52540">
    <property type="entry name" value="P-loop containing nucleoside triphosphate hydrolases"/>
    <property type="match status" value="1"/>
</dbReference>
<dbReference type="SUPFAM" id="SSF50447">
    <property type="entry name" value="Translation proteins"/>
    <property type="match status" value="1"/>
</dbReference>
<dbReference type="PROSITE" id="PS00301">
    <property type="entry name" value="G_TR_1"/>
    <property type="match status" value="1"/>
</dbReference>
<dbReference type="PROSITE" id="PS51722">
    <property type="entry name" value="G_TR_2"/>
    <property type="match status" value="1"/>
</dbReference>
<accession>Q6MJ00</accession>
<evidence type="ECO:0000250" key="1"/>
<evidence type="ECO:0000255" key="2">
    <source>
        <dbReference type="HAMAP-Rule" id="MF_00118"/>
    </source>
</evidence>
<gene>
    <name evidence="2" type="primary">tuf</name>
    <name type="ordered locus">Bd2994</name>
</gene>
<feature type="chain" id="PRO_1000015614" description="Elongation factor Tu">
    <location>
        <begin position="1"/>
        <end position="396"/>
    </location>
</feature>
<feature type="domain" description="tr-type G">
    <location>
        <begin position="10"/>
        <end position="206"/>
    </location>
</feature>
<feature type="region of interest" description="G1" evidence="1">
    <location>
        <begin position="19"/>
        <end position="26"/>
    </location>
</feature>
<feature type="region of interest" description="G2" evidence="1">
    <location>
        <begin position="60"/>
        <end position="64"/>
    </location>
</feature>
<feature type="region of interest" description="G3" evidence="1">
    <location>
        <begin position="81"/>
        <end position="84"/>
    </location>
</feature>
<feature type="region of interest" description="G4" evidence="1">
    <location>
        <begin position="136"/>
        <end position="139"/>
    </location>
</feature>
<feature type="region of interest" description="G5" evidence="1">
    <location>
        <begin position="174"/>
        <end position="176"/>
    </location>
</feature>
<feature type="binding site" evidence="2">
    <location>
        <begin position="19"/>
        <end position="26"/>
    </location>
    <ligand>
        <name>GTP</name>
        <dbReference type="ChEBI" id="CHEBI:37565"/>
    </ligand>
</feature>
<feature type="binding site" evidence="2">
    <location>
        <position position="26"/>
    </location>
    <ligand>
        <name>Mg(2+)</name>
        <dbReference type="ChEBI" id="CHEBI:18420"/>
    </ligand>
</feature>
<feature type="binding site" evidence="2">
    <location>
        <begin position="81"/>
        <end position="85"/>
    </location>
    <ligand>
        <name>GTP</name>
        <dbReference type="ChEBI" id="CHEBI:37565"/>
    </ligand>
</feature>
<feature type="binding site" evidence="2">
    <location>
        <begin position="136"/>
        <end position="139"/>
    </location>
    <ligand>
        <name>GTP</name>
        <dbReference type="ChEBI" id="CHEBI:37565"/>
    </ligand>
</feature>
<protein>
    <recommendedName>
        <fullName evidence="2">Elongation factor Tu</fullName>
        <shortName evidence="2">EF-Tu</shortName>
        <ecNumber evidence="2">3.6.5.3</ecNumber>
    </recommendedName>
</protein>
<sequence>MSKEKFTRNKPHVNIGTIGHVDHGKTTLTAAITTTLAASGKAQAMAYDQIDKSPEEKARGITISTTHVEYETDNRHYAHVDCPGHADYVKNMITGAAQMDGAILVVSSADGPMPQTREHILLARQVGVPALVVFMNKVDMVDDKELLELVELEVRELLSKYEFPGDDIPVVKGSALKALEGDTSEIGRPAIMKLMEACDTYIPAPVRAVDKTFLMPVEDVFSISGRGTVVTGRVERGIVKVGDEIEIVGIRPTQKTTVTGIEMFRKLLDEGQAGDNCGVLLRGTKKEDVERGQVLVKPGTVKPHKKFKAEAYILTKEEGGRHTPFFNGYRPQFYFRTTDVTGVCTLKAGTEMVMPGDKIEVSVELIAPIAMEKELRFAIREGGRTVGAGVVTEILE</sequence>